<organism>
    <name type="scientific">Aeromonas salmonicida (strain A449)</name>
    <dbReference type="NCBI Taxonomy" id="382245"/>
    <lineage>
        <taxon>Bacteria</taxon>
        <taxon>Pseudomonadati</taxon>
        <taxon>Pseudomonadota</taxon>
        <taxon>Gammaproteobacteria</taxon>
        <taxon>Aeromonadales</taxon>
        <taxon>Aeromonadaceae</taxon>
        <taxon>Aeromonas</taxon>
    </lineage>
</organism>
<name>ASTD_AERS4</name>
<protein>
    <recommendedName>
        <fullName evidence="1">N-succinylglutamate 5-semialdehyde dehydrogenase</fullName>
        <ecNumber evidence="1">1.2.1.71</ecNumber>
    </recommendedName>
    <alternativeName>
        <fullName evidence="1">Succinylglutamic semialdehyde dehydrogenase</fullName>
        <shortName evidence="1">SGSD</shortName>
    </alternativeName>
</protein>
<feature type="chain" id="PRO_1000065746" description="N-succinylglutamate 5-semialdehyde dehydrogenase">
    <location>
        <begin position="1"/>
        <end position="489"/>
    </location>
</feature>
<feature type="active site" evidence="1">
    <location>
        <position position="246"/>
    </location>
</feature>
<feature type="active site" evidence="1">
    <location>
        <position position="280"/>
    </location>
</feature>
<feature type="binding site" evidence="1">
    <location>
        <begin position="223"/>
        <end position="228"/>
    </location>
    <ligand>
        <name>NAD(+)</name>
        <dbReference type="ChEBI" id="CHEBI:57540"/>
    </ligand>
</feature>
<keyword id="KW-0056">Arginine metabolism</keyword>
<keyword id="KW-0520">NAD</keyword>
<keyword id="KW-0560">Oxidoreductase</keyword>
<gene>
    <name evidence="1" type="primary">astD</name>
    <name type="ordered locus">ASA_1136</name>
</gene>
<sequence>MSHLVQLIDGQWLAGEGKPFESMDPAKNEVIWQGGAASASQVDAAVKAARAAFYHWSDLALEDRLAIVRRYADLLGEHKEALALTIARETGKPLWETRTEVAAMQGKIAISIRAHDERTGTVENPMPGAKAFVRHKPHGVVAVFGPYNFPGHLPNGHIVPALIAGNTVVFKPSELTPMVAEAMLKIWQEAGLPKGVLNLVQGEVETGKALAGNPDIDGLFFTGSSRTGHFLHQQFAGQPGKILALEMGGNNPLIVKDVSDVDGAVHAIVQSAFITSGQRCTCSRRLFVERGARGDALVKRLVEVVGQIKVGLYDAADQPFMGAMISEKAALGMVAAQANLQQLGGESLLTLKHLEAGTGFVSPGIIDVTAIGALPDEEYFGPLLQLIRYDDFDAAIDQGNATSFGLSAGLLGDNEADWQHFFKRIRAGIVNWNKPITGASSAAPFGGIGASGNHRASAYYAADYCAYPVASVEDSKAAMPDQLSPGLTF</sequence>
<dbReference type="EC" id="1.2.1.71" evidence="1"/>
<dbReference type="EMBL" id="CP000644">
    <property type="protein sequence ID" value="ABO89257.1"/>
    <property type="molecule type" value="Genomic_DNA"/>
</dbReference>
<dbReference type="RefSeq" id="WP_005317097.1">
    <property type="nucleotide sequence ID" value="NC_009348.1"/>
</dbReference>
<dbReference type="SMR" id="A4SK35"/>
<dbReference type="STRING" id="29491.GCA_000820065_02090"/>
<dbReference type="KEGG" id="asa:ASA_1136"/>
<dbReference type="eggNOG" id="COG1012">
    <property type="taxonomic scope" value="Bacteria"/>
</dbReference>
<dbReference type="HOGENOM" id="CLU_005391_1_0_6"/>
<dbReference type="UniPathway" id="UPA00185">
    <property type="reaction ID" value="UER00282"/>
</dbReference>
<dbReference type="Proteomes" id="UP000000225">
    <property type="component" value="Chromosome"/>
</dbReference>
<dbReference type="GO" id="GO:0043824">
    <property type="term" value="F:succinylglutamate-semialdehyde dehydrogenase activity"/>
    <property type="evidence" value="ECO:0007669"/>
    <property type="project" value="UniProtKB-EC"/>
</dbReference>
<dbReference type="GO" id="GO:0019544">
    <property type="term" value="P:arginine catabolic process to glutamate"/>
    <property type="evidence" value="ECO:0007669"/>
    <property type="project" value="UniProtKB-UniRule"/>
</dbReference>
<dbReference type="GO" id="GO:0019545">
    <property type="term" value="P:arginine catabolic process to succinate"/>
    <property type="evidence" value="ECO:0007669"/>
    <property type="project" value="UniProtKB-UniRule"/>
</dbReference>
<dbReference type="CDD" id="cd07095">
    <property type="entry name" value="ALDH_SGSD_AstD"/>
    <property type="match status" value="1"/>
</dbReference>
<dbReference type="FunFam" id="3.40.605.10:FF:000010">
    <property type="entry name" value="N-succinylglutamate 5-semialdehyde dehydrogenase"/>
    <property type="match status" value="1"/>
</dbReference>
<dbReference type="Gene3D" id="3.40.605.10">
    <property type="entry name" value="Aldehyde Dehydrogenase, Chain A, domain 1"/>
    <property type="match status" value="1"/>
</dbReference>
<dbReference type="Gene3D" id="3.40.309.10">
    <property type="entry name" value="Aldehyde Dehydrogenase, Chain A, domain 2"/>
    <property type="match status" value="1"/>
</dbReference>
<dbReference type="HAMAP" id="MF_01174">
    <property type="entry name" value="Aldedh_AstD"/>
    <property type="match status" value="1"/>
</dbReference>
<dbReference type="InterPro" id="IPR016161">
    <property type="entry name" value="Ald_DH/histidinol_DH"/>
</dbReference>
<dbReference type="InterPro" id="IPR016163">
    <property type="entry name" value="Ald_DH_C"/>
</dbReference>
<dbReference type="InterPro" id="IPR016160">
    <property type="entry name" value="Ald_DH_CS_CYS"/>
</dbReference>
<dbReference type="InterPro" id="IPR029510">
    <property type="entry name" value="Ald_DH_CS_GLU"/>
</dbReference>
<dbReference type="InterPro" id="IPR016162">
    <property type="entry name" value="Ald_DH_N"/>
</dbReference>
<dbReference type="InterPro" id="IPR015590">
    <property type="entry name" value="Aldehyde_DH_dom"/>
</dbReference>
<dbReference type="InterPro" id="IPR050740">
    <property type="entry name" value="Aldehyde_DH_Superfamily"/>
</dbReference>
<dbReference type="InterPro" id="IPR017649">
    <property type="entry name" value="SuccinylGlu_semiald_DH_AstD"/>
</dbReference>
<dbReference type="NCBIfam" id="TIGR03240">
    <property type="entry name" value="arg_catab_astD"/>
    <property type="match status" value="1"/>
</dbReference>
<dbReference type="NCBIfam" id="NF006992">
    <property type="entry name" value="PRK09457.1"/>
    <property type="match status" value="1"/>
</dbReference>
<dbReference type="PANTHER" id="PTHR43353">
    <property type="entry name" value="SUCCINATE-SEMIALDEHYDE DEHYDROGENASE, MITOCHONDRIAL"/>
    <property type="match status" value="1"/>
</dbReference>
<dbReference type="PANTHER" id="PTHR43353:SF5">
    <property type="entry name" value="SUCCINATE-SEMIALDEHYDE DEHYDROGENASE, MITOCHONDRIAL"/>
    <property type="match status" value="1"/>
</dbReference>
<dbReference type="Pfam" id="PF00171">
    <property type="entry name" value="Aldedh"/>
    <property type="match status" value="1"/>
</dbReference>
<dbReference type="SUPFAM" id="SSF53720">
    <property type="entry name" value="ALDH-like"/>
    <property type="match status" value="1"/>
</dbReference>
<dbReference type="PROSITE" id="PS00070">
    <property type="entry name" value="ALDEHYDE_DEHYDR_CYS"/>
    <property type="match status" value="1"/>
</dbReference>
<dbReference type="PROSITE" id="PS00687">
    <property type="entry name" value="ALDEHYDE_DEHYDR_GLU"/>
    <property type="match status" value="1"/>
</dbReference>
<comment type="function">
    <text evidence="1">Catalyzes the NAD-dependent reduction of succinylglutamate semialdehyde into succinylglutamate.</text>
</comment>
<comment type="catalytic activity">
    <reaction evidence="1">
        <text>N-succinyl-L-glutamate 5-semialdehyde + NAD(+) + H2O = N-succinyl-L-glutamate + NADH + 2 H(+)</text>
        <dbReference type="Rhea" id="RHEA:10812"/>
        <dbReference type="ChEBI" id="CHEBI:15377"/>
        <dbReference type="ChEBI" id="CHEBI:15378"/>
        <dbReference type="ChEBI" id="CHEBI:57540"/>
        <dbReference type="ChEBI" id="CHEBI:57945"/>
        <dbReference type="ChEBI" id="CHEBI:58520"/>
        <dbReference type="ChEBI" id="CHEBI:58763"/>
        <dbReference type="EC" id="1.2.1.71"/>
    </reaction>
</comment>
<comment type="pathway">
    <text evidence="1">Amino-acid degradation; L-arginine degradation via AST pathway; L-glutamate and succinate from L-arginine: step 4/5.</text>
</comment>
<comment type="similarity">
    <text evidence="1">Belongs to the aldehyde dehydrogenase family. AstD subfamily.</text>
</comment>
<reference key="1">
    <citation type="journal article" date="2008" name="BMC Genomics">
        <title>The genome of Aeromonas salmonicida subsp. salmonicida A449: insights into the evolution of a fish pathogen.</title>
        <authorList>
            <person name="Reith M.E."/>
            <person name="Singh R.K."/>
            <person name="Curtis B."/>
            <person name="Boyd J.M."/>
            <person name="Bouevitch A."/>
            <person name="Kimball J."/>
            <person name="Munholland J."/>
            <person name="Murphy C."/>
            <person name="Sarty D."/>
            <person name="Williams J."/>
            <person name="Nash J.H."/>
            <person name="Johnson S.C."/>
            <person name="Brown L.L."/>
        </authorList>
    </citation>
    <scope>NUCLEOTIDE SEQUENCE [LARGE SCALE GENOMIC DNA]</scope>
    <source>
        <strain>A449</strain>
    </source>
</reference>
<proteinExistence type="inferred from homology"/>
<evidence type="ECO:0000255" key="1">
    <source>
        <dbReference type="HAMAP-Rule" id="MF_01174"/>
    </source>
</evidence>
<accession>A4SK35</accession>